<accession>Q67YS6</accession>
<accession>Q0WQT3</accession>
<accession>Q67YX0</accession>
<accession>Q8LDM0</accession>
<accession>Q9FNK7</accession>
<feature type="chain" id="PRO_0000366955" description="Putative ALA-interacting subunit 2">
    <location>
        <begin position="1"/>
        <end position="343"/>
    </location>
</feature>
<feature type="transmembrane region" description="Helical" evidence="1">
    <location>
        <begin position="43"/>
        <end position="63"/>
    </location>
</feature>
<feature type="transmembrane region" description="Helical" evidence="1">
    <location>
        <begin position="301"/>
        <end position="321"/>
    </location>
</feature>
<feature type="glycosylation site" description="N-linked (GlcNAc...) asparagine" evidence="1">
    <location>
        <position position="103"/>
    </location>
</feature>
<feature type="glycosylation site" description="N-linked (GlcNAc...) asparagine" evidence="1">
    <location>
        <position position="178"/>
    </location>
</feature>
<feature type="glycosylation site" description="N-linked (GlcNAc...) asparagine" evidence="1">
    <location>
        <position position="191"/>
    </location>
</feature>
<feature type="glycosylation site" description="N-linked (GlcNAc...) asparagine" evidence="1">
    <location>
        <position position="218"/>
    </location>
</feature>
<feature type="sequence conflict" description="In Ref. 3; BAF00516." evidence="3" ref="3">
    <original>F</original>
    <variation>L</variation>
    <location>
        <position position="119"/>
    </location>
</feature>
<feature type="sequence conflict" description="In Ref. 4; AAM63135." evidence="3" ref="4">
    <original>I</original>
    <variation>L</variation>
    <location>
        <position position="231"/>
    </location>
</feature>
<feature type="sequence conflict" description="In Ref. 3; BAD44111." evidence="3" ref="3">
    <original>R</original>
    <variation>G</variation>
    <location>
        <position position="257"/>
    </location>
</feature>
<feature type="sequence conflict" description="In Ref. 4; AAM63135." evidence="3" ref="4">
    <original>I</original>
    <variation>V</variation>
    <location>
        <position position="314"/>
    </location>
</feature>
<sequence>MMEVEGSMNRAPDQSSFLRSRRSKALYQFKQQKLPACKPVLTPISVITVFMLMGFVFIPIGLITLRASRDAIEIIDRYDVECIPEEYRTNKLLYITDSSIPKNCTRYLKVQKYMKAPIFIYYQLDNYYQNHRRYVKSRSDQQLLHGLEYSHTSSCEPEESSNGLPIVPCGLIAWSMFNDTFTFSRERTKLNVSRNNIAWKSDREHKFGKNVYPINFQNGTLIGGAKLDPKIPLSDQEDFIVWMRAAALLSFRKLYGRIEEDLEPGKVVEVNLMNNYNTYSFSGQKKLILSTSNWLGGRNDFLGITYLVVGSSSIVISIIFMLLHLKNPRPYGDNSWNKKSLSS</sequence>
<proteinExistence type="evidence at transcript level"/>
<comment type="subcellular location">
    <subcellularLocation>
        <location evidence="3">Membrane</location>
        <topology evidence="3">Multi-pass membrane protein</topology>
    </subcellularLocation>
</comment>
<comment type="tissue specificity">
    <text evidence="2">Expressed in roots, leaves, stems, flowers and siliques.</text>
</comment>
<comment type="similarity">
    <text evidence="3">Belongs to the CDC50/LEM3 family.</text>
</comment>
<comment type="sequence caution" evidence="3">
    <conflict type="erroneous initiation">
        <sequence resource="EMBL-CDS" id="AAM63135"/>
    </conflict>
</comment>
<comment type="sequence caution" evidence="3">
    <conflict type="erroneous gene model prediction">
        <sequence resource="EMBL-CDS" id="BAB08260"/>
    </conflict>
</comment>
<reference key="1">
    <citation type="journal article" date="1997" name="DNA Res.">
        <title>Structural analysis of Arabidopsis thaliana chromosome 5. II. Sequence features of the regions of 1,044,062 bp covered by thirteen physically assigned P1 clones.</title>
        <authorList>
            <person name="Kotani H."/>
            <person name="Nakamura Y."/>
            <person name="Sato S."/>
            <person name="Kaneko T."/>
            <person name="Asamizu E."/>
            <person name="Miyajima N."/>
            <person name="Tabata S."/>
        </authorList>
    </citation>
    <scope>NUCLEOTIDE SEQUENCE [LARGE SCALE GENOMIC DNA]</scope>
    <source>
        <strain>cv. Columbia</strain>
    </source>
</reference>
<reference key="2">
    <citation type="journal article" date="2017" name="Plant J.">
        <title>Araport11: a complete reannotation of the Arabidopsis thaliana reference genome.</title>
        <authorList>
            <person name="Cheng C.Y."/>
            <person name="Krishnakumar V."/>
            <person name="Chan A.P."/>
            <person name="Thibaud-Nissen F."/>
            <person name="Schobel S."/>
            <person name="Town C.D."/>
        </authorList>
    </citation>
    <scope>GENOME REANNOTATION</scope>
    <source>
        <strain>cv. Columbia</strain>
    </source>
</reference>
<reference key="3">
    <citation type="submission" date="2005-03" db="EMBL/GenBank/DDBJ databases">
        <title>Large-scale analysis of RIKEN Arabidopsis full-length (RAFL) cDNAs.</title>
        <authorList>
            <person name="Totoki Y."/>
            <person name="Seki M."/>
            <person name="Ishida J."/>
            <person name="Nakajima M."/>
            <person name="Enju A."/>
            <person name="Kamiya A."/>
            <person name="Narusaka M."/>
            <person name="Shin-i T."/>
            <person name="Nakagawa M."/>
            <person name="Sakamoto N."/>
            <person name="Oishi K."/>
            <person name="Kohara Y."/>
            <person name="Kobayashi M."/>
            <person name="Toyoda A."/>
            <person name="Sakaki Y."/>
            <person name="Sakurai T."/>
            <person name="Iida K."/>
            <person name="Akiyama K."/>
            <person name="Satou M."/>
            <person name="Toyoda T."/>
            <person name="Konagaya A."/>
            <person name="Carninci P."/>
            <person name="Kawai J."/>
            <person name="Hayashizaki Y."/>
            <person name="Shinozaki K."/>
        </authorList>
    </citation>
    <scope>NUCLEOTIDE SEQUENCE [LARGE SCALE MRNA]</scope>
    <source>
        <strain>cv. Columbia</strain>
    </source>
</reference>
<reference key="4">
    <citation type="submission" date="2002-03" db="EMBL/GenBank/DDBJ databases">
        <title>Full-length cDNA from Arabidopsis thaliana.</title>
        <authorList>
            <person name="Brover V.V."/>
            <person name="Troukhan M.E."/>
            <person name="Alexandrov N.A."/>
            <person name="Lu Y.-P."/>
            <person name="Flavell R.B."/>
            <person name="Feldmann K.A."/>
        </authorList>
    </citation>
    <scope>NUCLEOTIDE SEQUENCE [LARGE SCALE MRNA]</scope>
</reference>
<reference key="5">
    <citation type="submission" date="2006-03" db="EMBL/GenBank/DDBJ databases">
        <title>Arabidopsis ORF clones.</title>
        <authorList>
            <person name="Shinn P."/>
            <person name="Chen H."/>
            <person name="Kim C.J."/>
            <person name="Ecker J.R."/>
        </authorList>
    </citation>
    <scope>NUCLEOTIDE SEQUENCE [LARGE SCALE MRNA]</scope>
    <source>
        <strain>cv. Columbia</strain>
    </source>
</reference>
<reference key="6">
    <citation type="journal article" date="2008" name="Plant Cell">
        <title>The Arabidopsis P4-ATPase ALA3 localizes to the Golgi and requires a beta-subunit to function in lipid translocation and secretory vesicle formation.</title>
        <authorList>
            <person name="Poulsen L.R."/>
            <person name="Lopez-Marques R.L."/>
            <person name="McDowell S.C."/>
            <person name="Okkeri J."/>
            <person name="Licht D."/>
            <person name="Schulz A."/>
            <person name="Pomorski T."/>
            <person name="Harper J.F."/>
            <person name="Palmgren M.G."/>
        </authorList>
    </citation>
    <scope>NOMENCLATURE</scope>
    <scope>TISSUE SPECIFICITY</scope>
</reference>
<protein>
    <recommendedName>
        <fullName>Putative ALA-interacting subunit 2</fullName>
        <shortName>AtALIS2</shortName>
    </recommendedName>
</protein>
<name>ALIS2_ARATH</name>
<gene>
    <name type="primary">ALIS2</name>
    <name type="ordered locus">At5g46150</name>
    <name type="ORF">MCL19.21</name>
</gene>
<evidence type="ECO:0000255" key="1"/>
<evidence type="ECO:0000269" key="2">
    <source>
    </source>
</evidence>
<evidence type="ECO:0000305" key="3"/>
<organism>
    <name type="scientific">Arabidopsis thaliana</name>
    <name type="common">Mouse-ear cress</name>
    <dbReference type="NCBI Taxonomy" id="3702"/>
    <lineage>
        <taxon>Eukaryota</taxon>
        <taxon>Viridiplantae</taxon>
        <taxon>Streptophyta</taxon>
        <taxon>Embryophyta</taxon>
        <taxon>Tracheophyta</taxon>
        <taxon>Spermatophyta</taxon>
        <taxon>Magnoliopsida</taxon>
        <taxon>eudicotyledons</taxon>
        <taxon>Gunneridae</taxon>
        <taxon>Pentapetalae</taxon>
        <taxon>rosids</taxon>
        <taxon>malvids</taxon>
        <taxon>Brassicales</taxon>
        <taxon>Brassicaceae</taxon>
        <taxon>Camelineae</taxon>
        <taxon>Arabidopsis</taxon>
    </lineage>
</organism>
<keyword id="KW-0325">Glycoprotein</keyword>
<keyword id="KW-0472">Membrane</keyword>
<keyword id="KW-1185">Reference proteome</keyword>
<keyword id="KW-0812">Transmembrane</keyword>
<keyword id="KW-1133">Transmembrane helix</keyword>
<dbReference type="EMBL" id="AB006698">
    <property type="protein sequence ID" value="BAB08260.1"/>
    <property type="status" value="ALT_SEQ"/>
    <property type="molecule type" value="Genomic_DNA"/>
</dbReference>
<dbReference type="EMBL" id="CP002688">
    <property type="protein sequence ID" value="AED95345.1"/>
    <property type="molecule type" value="Genomic_DNA"/>
</dbReference>
<dbReference type="EMBL" id="CP002688">
    <property type="protein sequence ID" value="AED95346.1"/>
    <property type="molecule type" value="Genomic_DNA"/>
</dbReference>
<dbReference type="EMBL" id="AK175295">
    <property type="protein sequence ID" value="BAD43058.1"/>
    <property type="molecule type" value="mRNA"/>
</dbReference>
<dbReference type="EMBL" id="AK176392">
    <property type="protein sequence ID" value="BAD44155.1"/>
    <property type="molecule type" value="mRNA"/>
</dbReference>
<dbReference type="EMBL" id="AK176644">
    <property type="protein sequence ID" value="BAD44407.1"/>
    <property type="molecule type" value="mRNA"/>
</dbReference>
<dbReference type="EMBL" id="AK221710">
    <property type="protein sequence ID" value="BAD95435.1"/>
    <property type="molecule type" value="mRNA"/>
</dbReference>
<dbReference type="EMBL" id="AK228602">
    <property type="protein sequence ID" value="BAF00516.1"/>
    <property type="molecule type" value="mRNA"/>
</dbReference>
<dbReference type="EMBL" id="AK176348">
    <property type="protein sequence ID" value="BAD44111.1"/>
    <property type="molecule type" value="mRNA"/>
</dbReference>
<dbReference type="EMBL" id="AY085923">
    <property type="protein sequence ID" value="AAM63135.1"/>
    <property type="status" value="ALT_INIT"/>
    <property type="molecule type" value="mRNA"/>
</dbReference>
<dbReference type="EMBL" id="BT024877">
    <property type="protein sequence ID" value="ABD85148.1"/>
    <property type="molecule type" value="mRNA"/>
</dbReference>
<dbReference type="RefSeq" id="NP_001330145.1">
    <property type="nucleotide sequence ID" value="NM_001344659.1"/>
</dbReference>
<dbReference type="RefSeq" id="NP_568657.1">
    <property type="nucleotide sequence ID" value="NM_123984.4"/>
</dbReference>
<dbReference type="RefSeq" id="NP_851139.1">
    <property type="nucleotide sequence ID" value="NM_180808.2"/>
</dbReference>
<dbReference type="SMR" id="Q67YS6"/>
<dbReference type="FunCoup" id="Q67YS6">
    <property type="interactions" value="3285"/>
</dbReference>
<dbReference type="STRING" id="3702.Q67YS6"/>
<dbReference type="GlyCosmos" id="Q67YS6">
    <property type="glycosylation" value="4 sites, No reported glycans"/>
</dbReference>
<dbReference type="GlyGen" id="Q67YS6">
    <property type="glycosylation" value="4 sites"/>
</dbReference>
<dbReference type="iPTMnet" id="Q67YS6"/>
<dbReference type="PaxDb" id="3702-AT5G46150.2"/>
<dbReference type="ProteomicsDB" id="244809"/>
<dbReference type="EnsemblPlants" id="AT5G46150.1">
    <property type="protein sequence ID" value="AT5G46150.1"/>
    <property type="gene ID" value="AT5G46150"/>
</dbReference>
<dbReference type="EnsemblPlants" id="AT5G46150.2">
    <property type="protein sequence ID" value="AT5G46150.2"/>
    <property type="gene ID" value="AT5G46150"/>
</dbReference>
<dbReference type="GeneID" id="834657"/>
<dbReference type="Gramene" id="AT5G46150.1">
    <property type="protein sequence ID" value="AT5G46150.1"/>
    <property type="gene ID" value="AT5G46150"/>
</dbReference>
<dbReference type="Gramene" id="AT5G46150.2">
    <property type="protein sequence ID" value="AT5G46150.2"/>
    <property type="gene ID" value="AT5G46150"/>
</dbReference>
<dbReference type="KEGG" id="ath:AT5G46150"/>
<dbReference type="Araport" id="AT5G46150"/>
<dbReference type="TAIR" id="AT5G46150"/>
<dbReference type="eggNOG" id="KOG2952">
    <property type="taxonomic scope" value="Eukaryota"/>
</dbReference>
<dbReference type="HOGENOM" id="CLU_025025_1_1_1"/>
<dbReference type="InParanoid" id="Q67YS6"/>
<dbReference type="OrthoDB" id="340608at2759"/>
<dbReference type="PhylomeDB" id="Q67YS6"/>
<dbReference type="PRO" id="PR:Q67YS6"/>
<dbReference type="Proteomes" id="UP000006548">
    <property type="component" value="Chromosome 5"/>
</dbReference>
<dbReference type="ExpressionAtlas" id="Q67YS6">
    <property type="expression patterns" value="baseline and differential"/>
</dbReference>
<dbReference type="GO" id="GO:0016020">
    <property type="term" value="C:membrane"/>
    <property type="evidence" value="ECO:0007669"/>
    <property type="project" value="UniProtKB-SubCell"/>
</dbReference>
<dbReference type="InterPro" id="IPR005045">
    <property type="entry name" value="CDC50/LEM3_fam"/>
</dbReference>
<dbReference type="PANTHER" id="PTHR10926:SF29">
    <property type="entry name" value="ALA-INTERACTING SUBUNIT 2-RELATED"/>
    <property type="match status" value="1"/>
</dbReference>
<dbReference type="PANTHER" id="PTHR10926">
    <property type="entry name" value="CELL CYCLE CONTROL PROTEIN 50"/>
    <property type="match status" value="1"/>
</dbReference>
<dbReference type="Pfam" id="PF03381">
    <property type="entry name" value="CDC50"/>
    <property type="match status" value="1"/>
</dbReference>
<dbReference type="PIRSF" id="PIRSF015840">
    <property type="entry name" value="DUF284_TM_euk"/>
    <property type="match status" value="1"/>
</dbReference>